<accession>P86855</accession>
<organism>
    <name type="scientific">Mytilus galloprovincialis</name>
    <name type="common">Mediterranean mussel</name>
    <dbReference type="NCBI Taxonomy" id="29158"/>
    <lineage>
        <taxon>Eukaryota</taxon>
        <taxon>Metazoa</taxon>
        <taxon>Spiralia</taxon>
        <taxon>Lophotrochozoa</taxon>
        <taxon>Mollusca</taxon>
        <taxon>Bivalvia</taxon>
        <taxon>Autobranchia</taxon>
        <taxon>Pteriomorphia</taxon>
        <taxon>Mytilida</taxon>
        <taxon>Mytiloidea</taxon>
        <taxon>Mytilidae</taxon>
        <taxon>Mytilinae</taxon>
        <taxon>Mytilus</taxon>
    </lineage>
</organism>
<keyword id="KW-0903">Direct protein sequencing</keyword>
<keyword id="KW-1015">Disulfide bond</keyword>
<keyword id="KW-0964">Secreted</keyword>
<keyword id="KW-0732">Signal</keyword>
<proteinExistence type="evidence at protein level"/>
<name>PWAPL_MYTGA</name>
<protein>
    <recommendedName>
        <fullName evidence="5">Perlwapin-like protein</fullName>
    </recommendedName>
</protein>
<dbReference type="EMBL" id="FL494664">
    <property type="status" value="NOT_ANNOTATED_CDS"/>
    <property type="molecule type" value="mRNA"/>
</dbReference>
<dbReference type="GO" id="GO:0005576">
    <property type="term" value="C:extracellular region"/>
    <property type="evidence" value="ECO:0007669"/>
    <property type="project" value="UniProtKB-SubCell"/>
</dbReference>
<dbReference type="GO" id="GO:0030414">
    <property type="term" value="F:peptidase inhibitor activity"/>
    <property type="evidence" value="ECO:0007669"/>
    <property type="project" value="InterPro"/>
</dbReference>
<dbReference type="Gene3D" id="4.10.75.10">
    <property type="entry name" value="Elafin-like"/>
    <property type="match status" value="1"/>
</dbReference>
<dbReference type="InterPro" id="IPR036645">
    <property type="entry name" value="Elafin-like_sf"/>
</dbReference>
<dbReference type="InterPro" id="IPR008197">
    <property type="entry name" value="WAP_dom"/>
</dbReference>
<dbReference type="Pfam" id="PF00095">
    <property type="entry name" value="WAP"/>
    <property type="match status" value="1"/>
</dbReference>
<dbReference type="SUPFAM" id="SSF57256">
    <property type="entry name" value="Elafin-like"/>
    <property type="match status" value="1"/>
</dbReference>
<comment type="subcellular location">
    <subcellularLocation>
        <location evidence="4">Secreted</location>
    </subcellularLocation>
</comment>
<comment type="tissue specificity">
    <text evidence="4">Component of the organic matrix of calcified shell layers like nacre and prisms.</text>
</comment>
<sequence>MNVYFILFLGVFAFIEVNCKSRKSKSLGTCPKLDVSTVCVVDYKFNCLFQKQCPSGYRCCTYGCNRRCAAVTVNKKHLGSCRNSSGKKGKRCKKDKSCKRHEKCCNKRCRRVRKKIAPVRTLSKNSSNSFSFLMKLISINR</sequence>
<reference evidence="6" key="1">
    <citation type="journal article" date="2009" name="BMC Genomics">
        <title>MytiBase: a knowledgebase of mussel (M. galloprovincialis) transcribed sequences.</title>
        <authorList>
            <person name="Venier P."/>
            <person name="De Pitta C."/>
            <person name="Bernante F."/>
            <person name="Varotto L."/>
            <person name="De Nardi B."/>
            <person name="Bovo G."/>
            <person name="Roch P."/>
            <person name="Novoa B."/>
            <person name="Figueras A."/>
            <person name="Pallavicini A."/>
            <person name="Lanfranchi G."/>
        </authorList>
    </citation>
    <scope>NUCLEOTIDE SEQUENCE [MRNA]</scope>
</reference>
<reference evidence="6" key="2">
    <citation type="journal article" date="2011" name="J. Mol. Evol.">
        <title>Molecular evolution of mollusc shell proteins: insights from proteomic analysis of the edible mussel mytilus.</title>
        <authorList>
            <person name="Marie B."/>
            <person name="Le Roy N."/>
            <person name="Zanella-Cleon I."/>
            <person name="Becchi M."/>
            <person name="Marin F."/>
        </authorList>
    </citation>
    <scope>PROTEIN SEQUENCE OF 45-51 AND 68-76</scope>
    <scope>SUBCELLULAR LOCATION</scope>
    <scope>TISSUE SPECIFICITY</scope>
    <source>
        <tissue evidence="4">Shell</tissue>
    </source>
</reference>
<evidence type="ECO:0000250" key="1"/>
<evidence type="ECO:0000250" key="2">
    <source>
        <dbReference type="UniProtKB" id="Q9N0L8"/>
    </source>
</evidence>
<evidence type="ECO:0000255" key="3"/>
<evidence type="ECO:0000269" key="4">
    <source>
    </source>
</evidence>
<evidence type="ECO:0000303" key="5">
    <source>
    </source>
</evidence>
<evidence type="ECO:0000305" key="6"/>
<feature type="signal peptide" evidence="3">
    <location>
        <begin position="1"/>
        <end position="19"/>
    </location>
</feature>
<feature type="chain" id="PRO_0000404084" description="Perlwapin-like protein" evidence="3">
    <location>
        <begin position="20"/>
        <end position="141"/>
    </location>
</feature>
<feature type="domain" description="WAP" evidence="3">
    <location>
        <begin position="23"/>
        <end position="71"/>
    </location>
</feature>
<feature type="disulfide bond" evidence="2">
    <location>
        <begin position="30"/>
        <end position="60"/>
    </location>
</feature>
<feature type="disulfide bond" evidence="2">
    <location>
        <begin position="39"/>
        <end position="64"/>
    </location>
</feature>
<feature type="disulfide bond" evidence="2">
    <location>
        <begin position="47"/>
        <end position="59"/>
    </location>
</feature>
<feature type="disulfide bond" evidence="2">
    <location>
        <begin position="53"/>
        <end position="68"/>
    </location>
</feature>
<feature type="disulfide bond" evidence="1">
    <location>
        <begin position="81"/>
        <end position="105"/>
    </location>
</feature>
<feature type="disulfide bond" evidence="2">
    <location>
        <begin position="92"/>
        <end position="104"/>
    </location>
</feature>